<proteinExistence type="inferred from homology"/>
<organism>
    <name type="scientific">Mycobacterium bovis (strain ATCC BAA-935 / AF2122/97)</name>
    <dbReference type="NCBI Taxonomy" id="233413"/>
    <lineage>
        <taxon>Bacteria</taxon>
        <taxon>Bacillati</taxon>
        <taxon>Actinomycetota</taxon>
        <taxon>Actinomycetes</taxon>
        <taxon>Mycobacteriales</taxon>
        <taxon>Mycobacteriaceae</taxon>
        <taxon>Mycobacterium</taxon>
        <taxon>Mycobacterium tuberculosis complex</taxon>
    </lineage>
</organism>
<keyword id="KW-1003">Cell membrane</keyword>
<keyword id="KW-0472">Membrane</keyword>
<keyword id="KW-1185">Reference proteome</keyword>
<keyword id="KW-0812">Transmembrane</keyword>
<keyword id="KW-1133">Transmembrane helix</keyword>
<keyword id="KW-0813">Transport</keyword>
<feature type="chain" id="PRO_0000103655" description="Uncharacterized MFS-type transporter Mb0038c">
    <location>
        <begin position="1"/>
        <end position="441"/>
    </location>
</feature>
<feature type="transmembrane region" description="Helical" evidence="1">
    <location>
        <begin position="68"/>
        <end position="88"/>
    </location>
</feature>
<feature type="transmembrane region" description="Helical" evidence="1">
    <location>
        <begin position="110"/>
        <end position="130"/>
    </location>
</feature>
<feature type="transmembrane region" description="Helical" evidence="1">
    <location>
        <begin position="131"/>
        <end position="151"/>
    </location>
</feature>
<feature type="transmembrane region" description="Helical" evidence="1">
    <location>
        <begin position="164"/>
        <end position="184"/>
    </location>
</feature>
<feature type="transmembrane region" description="Helical" evidence="1">
    <location>
        <begin position="194"/>
        <end position="214"/>
    </location>
</feature>
<feature type="transmembrane region" description="Helical" evidence="1">
    <location>
        <begin position="229"/>
        <end position="246"/>
    </location>
</feature>
<feature type="transmembrane region" description="Helical" evidence="1">
    <location>
        <begin position="260"/>
        <end position="280"/>
    </location>
</feature>
<feature type="transmembrane region" description="Helical" evidence="1">
    <location>
        <begin position="287"/>
        <end position="307"/>
    </location>
</feature>
<feature type="transmembrane region" description="Helical" evidence="1">
    <location>
        <begin position="337"/>
        <end position="357"/>
    </location>
</feature>
<feature type="transmembrane region" description="Helical" evidence="1">
    <location>
        <begin position="384"/>
        <end position="404"/>
    </location>
</feature>
<feature type="transmembrane region" description="Helical" evidence="1">
    <location>
        <begin position="412"/>
        <end position="432"/>
    </location>
</feature>
<reference key="1">
    <citation type="journal article" date="2003" name="Proc. Natl. Acad. Sci. U.S.A.">
        <title>The complete genome sequence of Mycobacterium bovis.</title>
        <authorList>
            <person name="Garnier T."/>
            <person name="Eiglmeier K."/>
            <person name="Camus J.-C."/>
            <person name="Medina N."/>
            <person name="Mansoor H."/>
            <person name="Pryor M."/>
            <person name="Duthoy S."/>
            <person name="Grondin S."/>
            <person name="Lacroix C."/>
            <person name="Monsempe C."/>
            <person name="Simon S."/>
            <person name="Harris B."/>
            <person name="Atkin R."/>
            <person name="Doggett J."/>
            <person name="Mayes R."/>
            <person name="Keating L."/>
            <person name="Wheeler P.R."/>
            <person name="Parkhill J."/>
            <person name="Barrell B.G."/>
            <person name="Cole S.T."/>
            <person name="Gordon S.V."/>
            <person name="Hewinson R.G."/>
        </authorList>
    </citation>
    <scope>NUCLEOTIDE SEQUENCE [LARGE SCALE GENOMIC DNA]</scope>
    <source>
        <strain>ATCC BAA-935 / AF2122/97</strain>
    </source>
</reference>
<reference key="2">
    <citation type="journal article" date="2017" name="Genome Announc.">
        <title>Updated reference genome sequence and annotation of Mycobacterium bovis AF2122/97.</title>
        <authorList>
            <person name="Malone K.M."/>
            <person name="Farrell D."/>
            <person name="Stuber T.P."/>
            <person name="Schubert O.T."/>
            <person name="Aebersold R."/>
            <person name="Robbe-Austerman S."/>
            <person name="Gordon S.V."/>
        </authorList>
    </citation>
    <scope>NUCLEOTIDE SEQUENCE [LARGE SCALE GENOMIC DNA]</scope>
    <scope>GENOME REANNOTATION</scope>
    <source>
        <strain>ATCC BAA-935 / AF2122/97</strain>
    </source>
</reference>
<gene>
    <name type="ordered locus">BQ2027_MB0038C</name>
</gene>
<name>Y038_MYCBO</name>
<sequence length="441" mass="45866">MPRVEVGLVIHSRMHARAPVDVWRSVRSLPDFWRLLQVRVASQFGDGLFQAGLAGALLFNPDRAADPMAIAGAFAVLFLPYSLLGPFAGALMDRWDRRWVLVGANTGRLALIAGVGTILAVGAGDVPLLVGALVANGLARFVASGLSAALPHVVPREQVVTMNSVAIASGAVSAFLGANFMLLPRWLLGSGDEGASAIVFLVAIPVSIALLWSLRFGPRVLGPDDTERAIHGSAVYAVVTGWLHGARTVVQLPTVAAGLSGLAAHRMVVGINSLLILLLVRHVTARAVGGLGTALLFFAATGLGAFLANVLTPTAIRRWGRYATANGALAAAATIQVAAAGLLVPVMVVCGFLLGVAGQVVKLCADSAMQMDVDDALRGHVFAVQDALFWVSYILSITVAAALIPEHGHAPVFVLFGSAIYLAGLVVHTIVGRRGQPVIGR</sequence>
<comment type="subcellular location">
    <subcellularLocation>
        <location evidence="2">Cell membrane</location>
        <topology evidence="2">Multi-pass membrane protein</topology>
    </subcellularLocation>
</comment>
<comment type="similarity">
    <text evidence="2">Belongs to the major facilitator superfamily. Drug:H(+) antiporter-3 (DHA3) (TC 2.A.1.21) family.</text>
</comment>
<accession>P0A5C2</accession>
<accession>A0A1R3XWB8</accession>
<accession>P71607</accession>
<accession>X2BDU7</accession>
<dbReference type="EMBL" id="LT708304">
    <property type="protein sequence ID" value="SIT98398.1"/>
    <property type="molecule type" value="Genomic_DNA"/>
</dbReference>
<dbReference type="RefSeq" id="NP_853707.1">
    <property type="nucleotide sequence ID" value="NC_002945.3"/>
</dbReference>
<dbReference type="RefSeq" id="WP_003400431.1">
    <property type="nucleotide sequence ID" value="NC_002945.4"/>
</dbReference>
<dbReference type="SMR" id="P0A5C2"/>
<dbReference type="TCDB" id="2.A.1.21.14">
    <property type="family name" value="the major facilitator superfamily (mfs)"/>
</dbReference>
<dbReference type="KEGG" id="mbo:BQ2027_MB0038C"/>
<dbReference type="PATRIC" id="fig|233413.5.peg.44"/>
<dbReference type="Proteomes" id="UP000001419">
    <property type="component" value="Chromosome"/>
</dbReference>
<dbReference type="GO" id="GO:0005886">
    <property type="term" value="C:plasma membrane"/>
    <property type="evidence" value="ECO:0007669"/>
    <property type="project" value="UniProtKB-SubCell"/>
</dbReference>
<dbReference type="GO" id="GO:0022857">
    <property type="term" value="F:transmembrane transporter activity"/>
    <property type="evidence" value="ECO:0007669"/>
    <property type="project" value="InterPro"/>
</dbReference>
<dbReference type="CDD" id="cd06173">
    <property type="entry name" value="MFS_MefA_like"/>
    <property type="match status" value="1"/>
</dbReference>
<dbReference type="Gene3D" id="1.20.1250.20">
    <property type="entry name" value="MFS general substrate transporter like domains"/>
    <property type="match status" value="1"/>
</dbReference>
<dbReference type="InterPro" id="IPR011701">
    <property type="entry name" value="MFS"/>
</dbReference>
<dbReference type="InterPro" id="IPR036259">
    <property type="entry name" value="MFS_trans_sf"/>
</dbReference>
<dbReference type="PANTHER" id="PTHR23513">
    <property type="entry name" value="INTEGRAL MEMBRANE EFFLUX PROTEIN-RELATED"/>
    <property type="match status" value="1"/>
</dbReference>
<dbReference type="PANTHER" id="PTHR23513:SF17">
    <property type="entry name" value="MEMBRANE PROTEIN"/>
    <property type="match status" value="1"/>
</dbReference>
<dbReference type="Pfam" id="PF07690">
    <property type="entry name" value="MFS_1"/>
    <property type="match status" value="1"/>
</dbReference>
<dbReference type="SUPFAM" id="SSF103473">
    <property type="entry name" value="MFS general substrate transporter"/>
    <property type="match status" value="1"/>
</dbReference>
<evidence type="ECO:0000255" key="1"/>
<evidence type="ECO:0000305" key="2"/>
<protein>
    <recommendedName>
        <fullName>Uncharacterized MFS-type transporter Mb0038c</fullName>
    </recommendedName>
</protein>